<dbReference type="EC" id="3.1.-.-"/>
<dbReference type="EMBL" id="CR858133">
    <property type="protein sequence ID" value="CAH90372.1"/>
    <property type="molecule type" value="mRNA"/>
</dbReference>
<dbReference type="RefSeq" id="NP_001125181.1">
    <property type="nucleotide sequence ID" value="NM_001131709.1"/>
</dbReference>
<dbReference type="FunCoup" id="Q5RCY5">
    <property type="interactions" value="747"/>
</dbReference>
<dbReference type="STRING" id="9601.ENSPPYP00000015774"/>
<dbReference type="GeneID" id="100172070"/>
<dbReference type="KEGG" id="pon:100172070"/>
<dbReference type="CTD" id="28990"/>
<dbReference type="eggNOG" id="ENOG502QQRA">
    <property type="taxonomic scope" value="Eukaryota"/>
</dbReference>
<dbReference type="InParanoid" id="Q5RCY5"/>
<dbReference type="OrthoDB" id="25987at2759"/>
<dbReference type="Proteomes" id="UP000001595">
    <property type="component" value="Unplaced"/>
</dbReference>
<dbReference type="GO" id="GO:1990599">
    <property type="term" value="F:3' overhang single-stranded DNA endodeoxyribonuclease activity"/>
    <property type="evidence" value="ECO:0000250"/>
    <property type="project" value="UniProtKB"/>
</dbReference>
<dbReference type="GO" id="GO:0000014">
    <property type="term" value="F:single-stranded DNA endodeoxyribonuclease activity"/>
    <property type="evidence" value="ECO:0000250"/>
    <property type="project" value="UniProtKB"/>
</dbReference>
<dbReference type="GO" id="GO:0000724">
    <property type="term" value="P:double-strand break repair via homologous recombination"/>
    <property type="evidence" value="ECO:0000250"/>
    <property type="project" value="UniProtKB"/>
</dbReference>
<dbReference type="GO" id="GO:0006303">
    <property type="term" value="P:double-strand break repair via nonhomologous end joining"/>
    <property type="evidence" value="ECO:0000250"/>
    <property type="project" value="UniProtKB"/>
</dbReference>
<dbReference type="Gene3D" id="3.40.50.1010">
    <property type="entry name" value="5'-nuclease"/>
    <property type="match status" value="1"/>
</dbReference>
<dbReference type="InterPro" id="IPR026832">
    <property type="entry name" value="Asteroid"/>
</dbReference>
<dbReference type="InterPro" id="IPR029060">
    <property type="entry name" value="PIN-like_dom_sf"/>
</dbReference>
<dbReference type="InterPro" id="IPR006085">
    <property type="entry name" value="XPG_DNA_repair_N"/>
</dbReference>
<dbReference type="PANTHER" id="PTHR15665">
    <property type="entry name" value="ASTEROID PROTEIN"/>
    <property type="match status" value="1"/>
</dbReference>
<dbReference type="PANTHER" id="PTHR15665:SF1">
    <property type="entry name" value="PROTEIN ASTEROID HOMOLOG 1"/>
    <property type="match status" value="1"/>
</dbReference>
<dbReference type="Pfam" id="PF00752">
    <property type="entry name" value="XPG_N"/>
    <property type="match status" value="1"/>
</dbReference>
<dbReference type="SUPFAM" id="SSF88723">
    <property type="entry name" value="PIN domain-like"/>
    <property type="match status" value="1"/>
</dbReference>
<name>ASTE1_PONAB</name>
<feature type="chain" id="PRO_0000310460" description="Single-strand DNA endonuclease ASTE1">
    <location>
        <begin position="1"/>
        <end position="679"/>
    </location>
</feature>
<feature type="region of interest" description="Interaction with SHLD2" evidence="1">
    <location>
        <begin position="351"/>
        <end position="400"/>
    </location>
</feature>
<feature type="region of interest" description="Disordered" evidence="2">
    <location>
        <begin position="625"/>
        <end position="645"/>
    </location>
</feature>
<feature type="compositionally biased region" description="Basic residues" evidence="2">
    <location>
        <begin position="626"/>
        <end position="635"/>
    </location>
</feature>
<comment type="function">
    <text evidence="1">Structure-specific DNA endonuclease that specifically cleaves single-stranded DNA and 3' overhang DNA. Contributes to the control of DNA double-strand break repair choice by antagonizing BRCA1-dependent homologous recombination (HR) and promoting non-homologous end-joining (NHEJ). Recruited to the single-stranded DNA ends by SHLD2 and cleaves the 3' exposed DNA ends, therefore inhibiting DNA end resection (necessary for HR) and promoting DNA end protection (necessary for NHEJ).</text>
</comment>
<comment type="subunit">
    <text evidence="1">Interacts with SHLD1, SHLD2, SHLD3, RIF1 and MAD2L2/REV7.</text>
</comment>
<comment type="similarity">
    <text evidence="3">Belongs to the asteroid family.</text>
</comment>
<proteinExistence type="evidence at transcript level"/>
<organism>
    <name type="scientific">Pongo abelii</name>
    <name type="common">Sumatran orangutan</name>
    <name type="synonym">Pongo pygmaeus abelii</name>
    <dbReference type="NCBI Taxonomy" id="9601"/>
    <lineage>
        <taxon>Eukaryota</taxon>
        <taxon>Metazoa</taxon>
        <taxon>Chordata</taxon>
        <taxon>Craniata</taxon>
        <taxon>Vertebrata</taxon>
        <taxon>Euteleostomi</taxon>
        <taxon>Mammalia</taxon>
        <taxon>Eutheria</taxon>
        <taxon>Euarchontoglires</taxon>
        <taxon>Primates</taxon>
        <taxon>Haplorrhini</taxon>
        <taxon>Catarrhini</taxon>
        <taxon>Hominidae</taxon>
        <taxon>Pongo</taxon>
    </lineage>
</organism>
<reference key="1">
    <citation type="submission" date="2004-11" db="EMBL/GenBank/DDBJ databases">
        <authorList>
            <consortium name="The German cDNA consortium"/>
        </authorList>
    </citation>
    <scope>NUCLEOTIDE SEQUENCE [LARGE SCALE MRNA]</scope>
    <source>
        <tissue>Heart</tissue>
    </source>
</reference>
<evidence type="ECO:0000250" key="1">
    <source>
        <dbReference type="UniProtKB" id="Q2TB18"/>
    </source>
</evidence>
<evidence type="ECO:0000256" key="2">
    <source>
        <dbReference type="SAM" id="MobiDB-lite"/>
    </source>
</evidence>
<evidence type="ECO:0000305" key="3"/>
<sequence>MGIRGLMSFVEDHSNEFFTDLKLRDTKIVIDGYALFHRLCFSSNLDLRYGGDYDSFADVVQKFFESLFACNICPYVVLDGGCDISDKKLTTLKDRAREKIQMAHSLSVGGSGYVCPLLIREVFIQVLIKLRVCFVQCFSEADRDIMTLANHWNCPVLSSDSDFCIFDLKTGFCPLNSFQWRNMDTIKGTQNYIPAKCFSLDAFCHHFSNMNKALLPLFAVLCGNDHVNLPIMETFLSKARLPLGATSSKGRRHHRILGLLNWLSHFANPTEALDNVLKYLPKKDRENVKELLCCSMEEYQQSQVKLQDFFQCGTYVCPDALNLGLPEWVLVALAKGQLSPFISDALVLRRTILPTQVENMQQPNAHRISQPIRQIIYGLLLNASPHLDKTSWNALPPQPLAFSEVERINKNIRTSIIDAVELAKDHSDLSRLTELSLRRRQMLLLETLKVKQTILEPIPTSLKLPIAVSCYWLQHTETKAKLHHLQSLLLTMLVGPLIAIINSPGKEELQEDGAKMLYAEFQRVKAQTRLGTRLDLDTAHIFCQWQSCLQMGMYLNQLLPTPLPEPDLTRLYSGSLVHGLCQQLLASTSVESLLSICPEAKQLYEYLFNATRSYAPAEIFLPKGRSNSKKKRQKKQNTSCSKNRGRTTAHTKCWYEGNNRFGLLMVENLEEHSEASNIE</sequence>
<keyword id="KW-0378">Hydrolase</keyword>
<keyword id="KW-1185">Reference proteome</keyword>
<gene>
    <name type="primary">ASTE1</name>
</gene>
<protein>
    <recommendedName>
        <fullName>Single-strand DNA endonuclease ASTE1</fullName>
        <ecNumber>3.1.-.-</ecNumber>
    </recommendedName>
    <alternativeName>
        <fullName>Protein asteroid homolog 1</fullName>
    </alternativeName>
</protein>
<accession>Q5RCY5</accession>